<gene>
    <name evidence="1" type="primary">fbiA</name>
    <name type="ordered locus">Mjls_1360</name>
</gene>
<protein>
    <recommendedName>
        <fullName evidence="1">Phosphoenolpyruvate transferase</fullName>
        <ecNumber evidence="1">2.7.8.28</ecNumber>
    </recommendedName>
    <alternativeName>
        <fullName evidence="1">EPPG:FO PEP transferase</fullName>
    </alternativeName>
</protein>
<dbReference type="EC" id="2.7.8.28" evidence="1"/>
<dbReference type="EMBL" id="CP000580">
    <property type="protein sequence ID" value="ABN97162.1"/>
    <property type="molecule type" value="Genomic_DNA"/>
</dbReference>
<dbReference type="SMR" id="A3PW85"/>
<dbReference type="KEGG" id="mjl:Mjls_1360"/>
<dbReference type="HOGENOM" id="CLU_055795_0_0_11"/>
<dbReference type="BioCyc" id="MSP164757:G1G8C-1373-MONOMER"/>
<dbReference type="UniPathway" id="UPA00071"/>
<dbReference type="GO" id="GO:0043743">
    <property type="term" value="F:LPPG:FO 2-phospho-L-lactate transferase activity"/>
    <property type="evidence" value="ECO:0007669"/>
    <property type="project" value="UniProtKB-EC"/>
</dbReference>
<dbReference type="GO" id="GO:0000287">
    <property type="term" value="F:magnesium ion binding"/>
    <property type="evidence" value="ECO:0007669"/>
    <property type="project" value="InterPro"/>
</dbReference>
<dbReference type="GO" id="GO:0052645">
    <property type="term" value="P:F420-0 metabolic process"/>
    <property type="evidence" value="ECO:0007669"/>
    <property type="project" value="UniProtKB-UniRule"/>
</dbReference>
<dbReference type="CDD" id="cd07186">
    <property type="entry name" value="CofD_like"/>
    <property type="match status" value="1"/>
</dbReference>
<dbReference type="FunFam" id="1.10.8.240:FF:000001">
    <property type="entry name" value="2-phospho-L-lactate transferase"/>
    <property type="match status" value="1"/>
</dbReference>
<dbReference type="Gene3D" id="1.10.8.240">
    <property type="entry name" value="CofD-like domain"/>
    <property type="match status" value="1"/>
</dbReference>
<dbReference type="Gene3D" id="3.40.50.10680">
    <property type="entry name" value="CofD-like domains"/>
    <property type="match status" value="1"/>
</dbReference>
<dbReference type="HAMAP" id="MF_01257">
    <property type="entry name" value="CofD"/>
    <property type="match status" value="1"/>
</dbReference>
<dbReference type="InterPro" id="IPR002882">
    <property type="entry name" value="CofD"/>
</dbReference>
<dbReference type="InterPro" id="IPR038136">
    <property type="entry name" value="CofD-like_dom_sf"/>
</dbReference>
<dbReference type="InterPro" id="IPR010115">
    <property type="entry name" value="FbiA/CofD"/>
</dbReference>
<dbReference type="NCBIfam" id="TIGR01819">
    <property type="entry name" value="F420_cofD"/>
    <property type="match status" value="1"/>
</dbReference>
<dbReference type="PANTHER" id="PTHR43007">
    <property type="entry name" value="2-PHOSPHO-L-LACTATE TRANSFERASE"/>
    <property type="match status" value="1"/>
</dbReference>
<dbReference type="PANTHER" id="PTHR43007:SF1">
    <property type="entry name" value="2-PHOSPHO-L-LACTATE TRANSFERASE"/>
    <property type="match status" value="1"/>
</dbReference>
<dbReference type="Pfam" id="PF01933">
    <property type="entry name" value="CofD"/>
    <property type="match status" value="1"/>
</dbReference>
<dbReference type="SUPFAM" id="SSF142338">
    <property type="entry name" value="CofD-like"/>
    <property type="match status" value="1"/>
</dbReference>
<sequence>MKVTVLVGGVGGARFLLGVQHLLGLGQFARDDARDPDAHEVTAVVNVGDDTWMFGVRICPDLDTCMYTLGGGIDPDRGWGHRDETWHAKEELAAYGVQPDWFGLGDRDLATHLVRSQMLRAGYPLSQVTEALCDRWNPGARLLPASDDRSETHVVITDPDTDERRAIHFQEWWVRYRAKVPTHSFAFVGADKATTAPGVTDAIADADVVLLAPSNPVVSIGSILAIPGIRGALRSTSAKIIGYSPIIAGKPLRGMADECLSVIGVASTSEAVGRHYGARSGTGILDGWLVHEGDSAQIDGVEVEAVPLLMTDPATTAEMVRAGVRLAGVTL</sequence>
<accession>A3PW85</accession>
<evidence type="ECO:0000255" key="1">
    <source>
        <dbReference type="HAMAP-Rule" id="MF_01257"/>
    </source>
</evidence>
<keyword id="KW-0460">Magnesium</keyword>
<keyword id="KW-0808">Transferase</keyword>
<comment type="function">
    <text evidence="1">Catalyzes the transfer of the phosphoenolpyruvate moiety from enoylpyruvoyl-2-diphospho-5'-guanosine (EPPG) to 7,8-didemethyl-8-hydroxy-5-deazariboflavin (FO) with the formation of dehydro coenzyme F420-0 and GMP.</text>
</comment>
<comment type="catalytic activity">
    <reaction evidence="1">
        <text>enolpyruvoyl-2-diphospho-5'-guanosine + 7,8-didemethyl-8-hydroxy-5-deazariboflavin = dehydro coenzyme F420-0 + GMP + H(+)</text>
        <dbReference type="Rhea" id="RHEA:27510"/>
        <dbReference type="ChEBI" id="CHEBI:15378"/>
        <dbReference type="ChEBI" id="CHEBI:58115"/>
        <dbReference type="ChEBI" id="CHEBI:59904"/>
        <dbReference type="ChEBI" id="CHEBI:143701"/>
        <dbReference type="ChEBI" id="CHEBI:143705"/>
        <dbReference type="EC" id="2.7.8.28"/>
    </reaction>
</comment>
<comment type="cofactor">
    <cofactor evidence="1">
        <name>Mg(2+)</name>
        <dbReference type="ChEBI" id="CHEBI:18420"/>
    </cofactor>
</comment>
<comment type="pathway">
    <text evidence="1">Cofactor biosynthesis; coenzyme F420 biosynthesis.</text>
</comment>
<comment type="subunit">
    <text evidence="1">Homodimer.</text>
</comment>
<comment type="similarity">
    <text evidence="1">Belongs to the CofD family.</text>
</comment>
<organism>
    <name type="scientific">Mycobacterium sp. (strain JLS)</name>
    <dbReference type="NCBI Taxonomy" id="164757"/>
    <lineage>
        <taxon>Bacteria</taxon>
        <taxon>Bacillati</taxon>
        <taxon>Actinomycetota</taxon>
        <taxon>Actinomycetes</taxon>
        <taxon>Mycobacteriales</taxon>
        <taxon>Mycobacteriaceae</taxon>
        <taxon>Mycobacterium</taxon>
    </lineage>
</organism>
<name>FBIA_MYCSJ</name>
<proteinExistence type="inferred from homology"/>
<reference key="1">
    <citation type="submission" date="2007-02" db="EMBL/GenBank/DDBJ databases">
        <title>Complete sequence of Mycobacterium sp. JLS.</title>
        <authorList>
            <consortium name="US DOE Joint Genome Institute"/>
            <person name="Copeland A."/>
            <person name="Lucas S."/>
            <person name="Lapidus A."/>
            <person name="Barry K."/>
            <person name="Detter J.C."/>
            <person name="Glavina del Rio T."/>
            <person name="Hammon N."/>
            <person name="Israni S."/>
            <person name="Dalin E."/>
            <person name="Tice H."/>
            <person name="Pitluck S."/>
            <person name="Chain P."/>
            <person name="Malfatti S."/>
            <person name="Shin M."/>
            <person name="Vergez L."/>
            <person name="Schmutz J."/>
            <person name="Larimer F."/>
            <person name="Land M."/>
            <person name="Hauser L."/>
            <person name="Kyrpides N."/>
            <person name="Mikhailova N."/>
            <person name="Miller C.D."/>
            <person name="Anderson A.J."/>
            <person name="Sims R.C."/>
            <person name="Richardson P."/>
        </authorList>
    </citation>
    <scope>NUCLEOTIDE SEQUENCE [LARGE SCALE GENOMIC DNA]</scope>
    <source>
        <strain>JLS</strain>
    </source>
</reference>
<feature type="chain" id="PRO_1000067252" description="Phosphoenolpyruvate transferase">
    <location>
        <begin position="1"/>
        <end position="331"/>
    </location>
</feature>
<feature type="binding site" evidence="1">
    <location>
        <position position="63"/>
    </location>
    <ligand>
        <name>7,8-didemethyl-8-hydroxy-5-deazariboflavin</name>
        <dbReference type="ChEBI" id="CHEBI:59904"/>
    </ligand>
</feature>